<sequence length="432" mass="47966">MTLWVLGLNHQTAPMELRERASFVGDALPRALDSLRNLPNVNEAALLSTCNRTELYAETTNAQMLLNWLEQHRPGLQNHLYQYRDAAAVRHLFRVATGLDSMVLGESQILGQVKDSWSMARTHGTLGNTLDRLFQHSFSVAKHARTNTRIGTNPVSIASTAVRLAQDAFSPLNESTVLLIGAGETIQLAAKHLSEGRVQRLLIANRTHAKAQMLASQHGGYALPLTELNLHLAEADIIFSATAAPTPIVTQSNVESALHIRKRKPILLFDLAIPRDIETEVGTLTDAYLYTIDDLERAVEENRHSRREAAETAEAIIELQVKRYMDTLQAQAHQAPLRRLRTFGTTTRDELLTRARRQLANGRPAEEVLEQLAHGLTNRLLHPPTAALREAALANNTELVRAAEQLFPEKPGYHHPTLQTTIVKTDETDPAS</sequence>
<organism>
    <name type="scientific">Xylella fastidiosa (strain M23)</name>
    <dbReference type="NCBI Taxonomy" id="405441"/>
    <lineage>
        <taxon>Bacteria</taxon>
        <taxon>Pseudomonadati</taxon>
        <taxon>Pseudomonadota</taxon>
        <taxon>Gammaproteobacteria</taxon>
        <taxon>Lysobacterales</taxon>
        <taxon>Lysobacteraceae</taxon>
        <taxon>Xylella</taxon>
    </lineage>
</organism>
<comment type="function">
    <text evidence="1">Catalyzes the NADPH-dependent reduction of glutamyl-tRNA(Glu) to glutamate 1-semialdehyde (GSA).</text>
</comment>
<comment type="catalytic activity">
    <reaction evidence="1">
        <text>(S)-4-amino-5-oxopentanoate + tRNA(Glu) + NADP(+) = L-glutamyl-tRNA(Glu) + NADPH + H(+)</text>
        <dbReference type="Rhea" id="RHEA:12344"/>
        <dbReference type="Rhea" id="RHEA-COMP:9663"/>
        <dbReference type="Rhea" id="RHEA-COMP:9680"/>
        <dbReference type="ChEBI" id="CHEBI:15378"/>
        <dbReference type="ChEBI" id="CHEBI:57501"/>
        <dbReference type="ChEBI" id="CHEBI:57783"/>
        <dbReference type="ChEBI" id="CHEBI:58349"/>
        <dbReference type="ChEBI" id="CHEBI:78442"/>
        <dbReference type="ChEBI" id="CHEBI:78520"/>
        <dbReference type="EC" id="1.2.1.70"/>
    </reaction>
</comment>
<comment type="pathway">
    <text evidence="1">Porphyrin-containing compound metabolism; protoporphyrin-IX biosynthesis; 5-aminolevulinate from L-glutamyl-tRNA(Glu): step 1/2.</text>
</comment>
<comment type="subunit">
    <text evidence="1">Homodimer.</text>
</comment>
<comment type="domain">
    <text evidence="1">Possesses an unusual extended V-shaped dimeric structure with each monomer consisting of three distinct domains arranged along a curved 'spinal' alpha-helix. The N-terminal catalytic domain specifically recognizes the glutamate moiety of the substrate. The second domain is the NADPH-binding domain, and the third C-terminal domain is responsible for dimerization.</text>
</comment>
<comment type="miscellaneous">
    <text evidence="1">During catalysis, the active site Cys acts as a nucleophile attacking the alpha-carbonyl group of tRNA-bound glutamate with the formation of a thioester intermediate between enzyme and glutamate, and the concomitant release of tRNA(Glu). The thioester intermediate is finally reduced by direct hydride transfer from NADPH, to form the product GSA.</text>
</comment>
<comment type="similarity">
    <text evidence="1">Belongs to the glutamyl-tRNA reductase family.</text>
</comment>
<reference key="1">
    <citation type="journal article" date="2010" name="J. Bacteriol.">
        <title>Whole genome sequences of two Xylella fastidiosa strains (M12 and M23) causing almond leaf scorch disease in California.</title>
        <authorList>
            <person name="Chen J."/>
            <person name="Xie G."/>
            <person name="Han S."/>
            <person name="Chertkov O."/>
            <person name="Sims D."/>
            <person name="Civerolo E.L."/>
        </authorList>
    </citation>
    <scope>NUCLEOTIDE SEQUENCE [LARGE SCALE GENOMIC DNA]</scope>
    <source>
        <strain>M23</strain>
    </source>
</reference>
<dbReference type="EC" id="1.2.1.70" evidence="1"/>
<dbReference type="EMBL" id="CP001011">
    <property type="protein sequence ID" value="ACB93520.1"/>
    <property type="molecule type" value="Genomic_DNA"/>
</dbReference>
<dbReference type="RefSeq" id="WP_004087400.1">
    <property type="nucleotide sequence ID" value="NC_010577.1"/>
</dbReference>
<dbReference type="SMR" id="B2IA84"/>
<dbReference type="GeneID" id="93905882"/>
<dbReference type="KEGG" id="xfn:XfasM23_2122"/>
<dbReference type="HOGENOM" id="CLU_035113_2_2_6"/>
<dbReference type="UniPathway" id="UPA00251">
    <property type="reaction ID" value="UER00316"/>
</dbReference>
<dbReference type="Proteomes" id="UP000001698">
    <property type="component" value="Chromosome"/>
</dbReference>
<dbReference type="GO" id="GO:0008883">
    <property type="term" value="F:glutamyl-tRNA reductase activity"/>
    <property type="evidence" value="ECO:0007669"/>
    <property type="project" value="UniProtKB-UniRule"/>
</dbReference>
<dbReference type="GO" id="GO:0050661">
    <property type="term" value="F:NADP binding"/>
    <property type="evidence" value="ECO:0007669"/>
    <property type="project" value="InterPro"/>
</dbReference>
<dbReference type="GO" id="GO:0019353">
    <property type="term" value="P:protoporphyrinogen IX biosynthetic process from glutamate"/>
    <property type="evidence" value="ECO:0007669"/>
    <property type="project" value="TreeGrafter"/>
</dbReference>
<dbReference type="CDD" id="cd05213">
    <property type="entry name" value="NAD_bind_Glutamyl_tRNA_reduct"/>
    <property type="match status" value="1"/>
</dbReference>
<dbReference type="FunFam" id="3.30.460.30:FF:000001">
    <property type="entry name" value="Glutamyl-tRNA reductase"/>
    <property type="match status" value="1"/>
</dbReference>
<dbReference type="FunFam" id="3.40.50.720:FF:000031">
    <property type="entry name" value="Glutamyl-tRNA reductase"/>
    <property type="match status" value="1"/>
</dbReference>
<dbReference type="Gene3D" id="3.30.460.30">
    <property type="entry name" value="Glutamyl-tRNA reductase, N-terminal domain"/>
    <property type="match status" value="1"/>
</dbReference>
<dbReference type="Gene3D" id="3.40.50.720">
    <property type="entry name" value="NAD(P)-binding Rossmann-like Domain"/>
    <property type="match status" value="1"/>
</dbReference>
<dbReference type="HAMAP" id="MF_00087">
    <property type="entry name" value="Glu_tRNA_reductase"/>
    <property type="match status" value="1"/>
</dbReference>
<dbReference type="InterPro" id="IPR000343">
    <property type="entry name" value="4pyrrol_synth_GluRdtase"/>
</dbReference>
<dbReference type="InterPro" id="IPR015896">
    <property type="entry name" value="4pyrrol_synth_GluRdtase_dimer"/>
</dbReference>
<dbReference type="InterPro" id="IPR015895">
    <property type="entry name" value="4pyrrol_synth_GluRdtase_N"/>
</dbReference>
<dbReference type="InterPro" id="IPR018214">
    <property type="entry name" value="GluRdtase_CS"/>
</dbReference>
<dbReference type="InterPro" id="IPR036453">
    <property type="entry name" value="GluRdtase_dimer_dom_sf"/>
</dbReference>
<dbReference type="InterPro" id="IPR036343">
    <property type="entry name" value="GluRdtase_N_sf"/>
</dbReference>
<dbReference type="InterPro" id="IPR036291">
    <property type="entry name" value="NAD(P)-bd_dom_sf"/>
</dbReference>
<dbReference type="InterPro" id="IPR006151">
    <property type="entry name" value="Shikm_DH/Glu-tRNA_Rdtase"/>
</dbReference>
<dbReference type="NCBIfam" id="TIGR01035">
    <property type="entry name" value="hemA"/>
    <property type="match status" value="1"/>
</dbReference>
<dbReference type="PANTHER" id="PTHR43013">
    <property type="entry name" value="GLUTAMYL-TRNA REDUCTASE"/>
    <property type="match status" value="1"/>
</dbReference>
<dbReference type="PANTHER" id="PTHR43013:SF1">
    <property type="entry name" value="GLUTAMYL-TRNA REDUCTASE"/>
    <property type="match status" value="1"/>
</dbReference>
<dbReference type="Pfam" id="PF00745">
    <property type="entry name" value="GlutR_dimer"/>
    <property type="match status" value="1"/>
</dbReference>
<dbReference type="Pfam" id="PF05201">
    <property type="entry name" value="GlutR_N"/>
    <property type="match status" value="1"/>
</dbReference>
<dbReference type="Pfam" id="PF01488">
    <property type="entry name" value="Shikimate_DH"/>
    <property type="match status" value="1"/>
</dbReference>
<dbReference type="PIRSF" id="PIRSF000445">
    <property type="entry name" value="4pyrrol_synth_GluRdtase"/>
    <property type="match status" value="1"/>
</dbReference>
<dbReference type="SUPFAM" id="SSF69742">
    <property type="entry name" value="Glutamyl tRNA-reductase catalytic, N-terminal domain"/>
    <property type="match status" value="1"/>
</dbReference>
<dbReference type="SUPFAM" id="SSF69075">
    <property type="entry name" value="Glutamyl tRNA-reductase dimerization domain"/>
    <property type="match status" value="1"/>
</dbReference>
<dbReference type="SUPFAM" id="SSF51735">
    <property type="entry name" value="NAD(P)-binding Rossmann-fold domains"/>
    <property type="match status" value="1"/>
</dbReference>
<dbReference type="PROSITE" id="PS00747">
    <property type="entry name" value="GLUTR"/>
    <property type="match status" value="1"/>
</dbReference>
<evidence type="ECO:0000255" key="1">
    <source>
        <dbReference type="HAMAP-Rule" id="MF_00087"/>
    </source>
</evidence>
<evidence type="ECO:0000256" key="2">
    <source>
        <dbReference type="SAM" id="MobiDB-lite"/>
    </source>
</evidence>
<feature type="chain" id="PRO_1000093179" description="Glutamyl-tRNA reductase">
    <location>
        <begin position="1"/>
        <end position="432"/>
    </location>
</feature>
<feature type="region of interest" description="Disordered" evidence="2">
    <location>
        <begin position="410"/>
        <end position="432"/>
    </location>
</feature>
<feature type="active site" description="Nucleophile" evidence="1">
    <location>
        <position position="50"/>
    </location>
</feature>
<feature type="binding site" evidence="1">
    <location>
        <begin position="49"/>
        <end position="52"/>
    </location>
    <ligand>
        <name>substrate</name>
    </ligand>
</feature>
<feature type="binding site" evidence="1">
    <location>
        <position position="101"/>
    </location>
    <ligand>
        <name>substrate</name>
    </ligand>
</feature>
<feature type="binding site" evidence="1">
    <location>
        <begin position="106"/>
        <end position="108"/>
    </location>
    <ligand>
        <name>substrate</name>
    </ligand>
</feature>
<feature type="binding site" evidence="1">
    <location>
        <position position="112"/>
    </location>
    <ligand>
        <name>substrate</name>
    </ligand>
</feature>
<feature type="binding site" evidence="1">
    <location>
        <begin position="181"/>
        <end position="186"/>
    </location>
    <ligand>
        <name>NADP(+)</name>
        <dbReference type="ChEBI" id="CHEBI:58349"/>
    </ligand>
</feature>
<feature type="site" description="Important for activity" evidence="1">
    <location>
        <position position="91"/>
    </location>
</feature>
<proteinExistence type="inferred from homology"/>
<keyword id="KW-0521">NADP</keyword>
<keyword id="KW-0560">Oxidoreductase</keyword>
<keyword id="KW-0627">Porphyrin biosynthesis</keyword>
<protein>
    <recommendedName>
        <fullName evidence="1">Glutamyl-tRNA reductase</fullName>
        <shortName evidence="1">GluTR</shortName>
        <ecNumber evidence="1">1.2.1.70</ecNumber>
    </recommendedName>
</protein>
<accession>B2IA84</accession>
<gene>
    <name evidence="1" type="primary">hemA</name>
    <name type="ordered locus">XfasM23_2122</name>
</gene>
<name>HEM1_XYLF2</name>